<keyword id="KW-0456">Lyase</keyword>
<keyword id="KW-1185">Reference proteome</keyword>
<gene>
    <name evidence="1" type="primary">fumD</name>
    <name type="synonym">ydhZ</name>
    <name type="ordered locus">STM1388</name>
</gene>
<protein>
    <recommendedName>
        <fullName evidence="1">Fumarase D</fullName>
        <ecNumber evidence="1">4.2.1.2</ecNumber>
    </recommendedName>
</protein>
<name>FUMD_SALTY</name>
<organism>
    <name type="scientific">Salmonella typhimurium (strain LT2 / SGSC1412 / ATCC 700720)</name>
    <dbReference type="NCBI Taxonomy" id="99287"/>
    <lineage>
        <taxon>Bacteria</taxon>
        <taxon>Pseudomonadati</taxon>
        <taxon>Pseudomonadota</taxon>
        <taxon>Gammaproteobacteria</taxon>
        <taxon>Enterobacterales</taxon>
        <taxon>Enterobacteriaceae</taxon>
        <taxon>Salmonella</taxon>
    </lineage>
</organism>
<accession>P0A1T4</accession>
<accession>Q9Z4T1</accession>
<comment type="function">
    <text evidence="1">In vitro catalyzes the addition of water to fumarate, forming malate. Cannot catalyze the reverse reaction. Cannot use the cis-isomer maleate as substrate.</text>
</comment>
<comment type="catalytic activity">
    <reaction evidence="1">
        <text>(S)-malate = fumarate + H2O</text>
        <dbReference type="Rhea" id="RHEA:12460"/>
        <dbReference type="ChEBI" id="CHEBI:15377"/>
        <dbReference type="ChEBI" id="CHEBI:15589"/>
        <dbReference type="ChEBI" id="CHEBI:29806"/>
        <dbReference type="EC" id="4.2.1.2"/>
    </reaction>
</comment>
<comment type="similarity">
    <text evidence="2">Belongs to the FumD family.</text>
</comment>
<reference key="1">
    <citation type="journal article" date="1999" name="Mol. Microbiol.">
        <title>The genetic basis of tetrathionate respiration in Salmonella typhimurium.</title>
        <authorList>
            <person name="Hensel M."/>
            <person name="Hinsley A.P."/>
            <person name="Nikolaus T."/>
            <person name="Sawers G."/>
            <person name="Berks B.C."/>
        </authorList>
    </citation>
    <scope>NUCLEOTIDE SEQUENCE [GENOMIC DNA]</scope>
    <source>
        <strain>LT2</strain>
    </source>
</reference>
<reference key="2">
    <citation type="journal article" date="2001" name="Nature">
        <title>Complete genome sequence of Salmonella enterica serovar Typhimurium LT2.</title>
        <authorList>
            <person name="McClelland M."/>
            <person name="Sanderson K.E."/>
            <person name="Spieth J."/>
            <person name="Clifton S.W."/>
            <person name="Latreille P."/>
            <person name="Courtney L."/>
            <person name="Porwollik S."/>
            <person name="Ali J."/>
            <person name="Dante M."/>
            <person name="Du F."/>
            <person name="Hou S."/>
            <person name="Layman D."/>
            <person name="Leonard S."/>
            <person name="Nguyen C."/>
            <person name="Scott K."/>
            <person name="Holmes A."/>
            <person name="Grewal N."/>
            <person name="Mulvaney E."/>
            <person name="Ryan E."/>
            <person name="Sun H."/>
            <person name="Florea L."/>
            <person name="Miller W."/>
            <person name="Stoneking T."/>
            <person name="Nhan M."/>
            <person name="Waterston R."/>
            <person name="Wilson R.K."/>
        </authorList>
    </citation>
    <scope>NUCLEOTIDE SEQUENCE [LARGE SCALE GENOMIC DNA]</scope>
    <source>
        <strain>LT2 / SGSC1412 / ATCC 700720</strain>
    </source>
</reference>
<proteinExistence type="inferred from homology"/>
<feature type="chain" id="PRO_0000168987" description="Fumarase D">
    <location>
        <begin position="1"/>
        <end position="70"/>
    </location>
</feature>
<dbReference type="EC" id="4.2.1.2" evidence="1"/>
<dbReference type="EMBL" id="AJ224978">
    <property type="protein sequence ID" value="CAB37411.1"/>
    <property type="molecule type" value="Genomic_DNA"/>
</dbReference>
<dbReference type="EMBL" id="AE006468">
    <property type="protein sequence ID" value="AAL20312.1"/>
    <property type="molecule type" value="Genomic_DNA"/>
</dbReference>
<dbReference type="RefSeq" id="WP_000165779.1">
    <property type="nucleotide sequence ID" value="NC_003197.2"/>
</dbReference>
<dbReference type="SMR" id="P0A1T4"/>
<dbReference type="STRING" id="99287.STM1388"/>
<dbReference type="PaxDb" id="99287-STM1388"/>
<dbReference type="KEGG" id="stm:STM1388"/>
<dbReference type="PATRIC" id="fig|99287.12.peg.1471"/>
<dbReference type="HOGENOM" id="CLU_2755438_0_0_6"/>
<dbReference type="OMA" id="ALYQEMC"/>
<dbReference type="PhylomeDB" id="P0A1T4"/>
<dbReference type="BioCyc" id="SENT99287:STM1388-MONOMER"/>
<dbReference type="PHI-base" id="PHI:603"/>
<dbReference type="Proteomes" id="UP000001014">
    <property type="component" value="Chromosome"/>
</dbReference>
<dbReference type="GO" id="GO:0004333">
    <property type="term" value="F:fumarate hydratase activity"/>
    <property type="evidence" value="ECO:0007669"/>
    <property type="project" value="UniProtKB-EC"/>
</dbReference>
<dbReference type="InterPro" id="IPR024493">
    <property type="entry name" value="FumD"/>
</dbReference>
<dbReference type="NCBIfam" id="NF007630">
    <property type="entry name" value="PRK10292.1"/>
    <property type="match status" value="1"/>
</dbReference>
<dbReference type="Pfam" id="PF10965">
    <property type="entry name" value="DUF2767"/>
    <property type="match status" value="1"/>
</dbReference>
<sequence>MTKPTKDDELYREMCRVVGKVVLEMRDLGQEPKYIVIAGVLRTALANQRIQRSALEKQAMETVINALARS</sequence>
<evidence type="ECO:0000250" key="1">
    <source>
        <dbReference type="UniProtKB" id="P0ACX5"/>
    </source>
</evidence>
<evidence type="ECO:0000305" key="2"/>